<name>DXR_BACFR</name>
<protein>
    <recommendedName>
        <fullName evidence="1">1-deoxy-D-xylulose 5-phosphate reductoisomerase</fullName>
        <shortName evidence="1">DXP reductoisomerase</shortName>
        <ecNumber evidence="1">1.1.1.267</ecNumber>
    </recommendedName>
    <alternativeName>
        <fullName evidence="1">1-deoxyxylulose-5-phosphate reductoisomerase</fullName>
    </alternativeName>
    <alternativeName>
        <fullName evidence="1">2-C-methyl-D-erythritol 4-phosphate synthase</fullName>
    </alternativeName>
</protein>
<evidence type="ECO:0000255" key="1">
    <source>
        <dbReference type="HAMAP-Rule" id="MF_00183"/>
    </source>
</evidence>
<reference key="1">
    <citation type="journal article" date="2004" name="Proc. Natl. Acad. Sci. U.S.A.">
        <title>Genomic analysis of Bacteroides fragilis reveals extensive DNA inversions regulating cell surface adaptation.</title>
        <authorList>
            <person name="Kuwahara T."/>
            <person name="Yamashita A."/>
            <person name="Hirakawa H."/>
            <person name="Nakayama H."/>
            <person name="Toh H."/>
            <person name="Okada N."/>
            <person name="Kuhara S."/>
            <person name="Hattori M."/>
            <person name="Hayashi T."/>
            <person name="Ohnishi Y."/>
        </authorList>
    </citation>
    <scope>NUCLEOTIDE SEQUENCE [LARGE SCALE GENOMIC DNA]</scope>
    <source>
        <strain>YCH46</strain>
    </source>
</reference>
<accession>Q64PY9</accession>
<organism>
    <name type="scientific">Bacteroides fragilis (strain YCH46)</name>
    <dbReference type="NCBI Taxonomy" id="295405"/>
    <lineage>
        <taxon>Bacteria</taxon>
        <taxon>Pseudomonadati</taxon>
        <taxon>Bacteroidota</taxon>
        <taxon>Bacteroidia</taxon>
        <taxon>Bacteroidales</taxon>
        <taxon>Bacteroidaceae</taxon>
        <taxon>Bacteroides</taxon>
    </lineage>
</organism>
<proteinExistence type="inferred from homology"/>
<sequence length="388" mass="42666">MNEIKKKQIAILGSTGSIGTQALQVIEEHPELYEVYALTANNKVDLLIAQARKFMPEAVVIANEEKYAQLKEALSDLPVKVYAGAAALCQIVESGPIDVVLTAMVGYAGLKPTMNAIRAGKAIALANKETLVVAGELINQLARQYRTPILPVDSEHSAVFQCLAGEVGNPIEKVILTASGGPFRTCTMEQLKTVTKVQALKHPNWEMGAKITIDSASMMNKGFEVIEAKWLFGVQPGQIEVVVHPQSVIHSMVQFEDGAIKAQLGMPDMRLPIQYAFSYPDRINSSFDRLDFSKCTNLTFEQPDTKRFRNLALAYESMYRGGNMPCIVNAANEVVVAAFLRDEISFLGMSDVIEHTMGQVSFVQTPTYDDYVATDAEARRIARELICK</sequence>
<keyword id="KW-0414">Isoprene biosynthesis</keyword>
<keyword id="KW-0464">Manganese</keyword>
<keyword id="KW-0479">Metal-binding</keyword>
<keyword id="KW-0521">NADP</keyword>
<keyword id="KW-0560">Oxidoreductase</keyword>
<dbReference type="EC" id="1.1.1.267" evidence="1"/>
<dbReference type="EMBL" id="AP006841">
    <property type="protein sequence ID" value="BAD50442.1"/>
    <property type="molecule type" value="Genomic_DNA"/>
</dbReference>
<dbReference type="RefSeq" id="WP_005802379.1">
    <property type="nucleotide sequence ID" value="NZ_UYXF01000029.1"/>
</dbReference>
<dbReference type="RefSeq" id="YP_100976.1">
    <property type="nucleotide sequence ID" value="NC_006347.1"/>
</dbReference>
<dbReference type="SMR" id="Q64PY9"/>
<dbReference type="STRING" id="295405.BF3699"/>
<dbReference type="KEGG" id="bfr:BF3699"/>
<dbReference type="PATRIC" id="fig|295405.11.peg.3550"/>
<dbReference type="HOGENOM" id="CLU_035714_4_0_10"/>
<dbReference type="OrthoDB" id="9806546at2"/>
<dbReference type="UniPathway" id="UPA00056">
    <property type="reaction ID" value="UER00092"/>
</dbReference>
<dbReference type="Proteomes" id="UP000002197">
    <property type="component" value="Chromosome"/>
</dbReference>
<dbReference type="GO" id="GO:0030604">
    <property type="term" value="F:1-deoxy-D-xylulose-5-phosphate reductoisomerase activity"/>
    <property type="evidence" value="ECO:0007669"/>
    <property type="project" value="UniProtKB-UniRule"/>
</dbReference>
<dbReference type="GO" id="GO:0030145">
    <property type="term" value="F:manganese ion binding"/>
    <property type="evidence" value="ECO:0007669"/>
    <property type="project" value="TreeGrafter"/>
</dbReference>
<dbReference type="GO" id="GO:0070402">
    <property type="term" value="F:NADPH binding"/>
    <property type="evidence" value="ECO:0007669"/>
    <property type="project" value="InterPro"/>
</dbReference>
<dbReference type="GO" id="GO:0051484">
    <property type="term" value="P:isopentenyl diphosphate biosynthetic process, methylerythritol 4-phosphate pathway involved in terpenoid biosynthetic process"/>
    <property type="evidence" value="ECO:0007669"/>
    <property type="project" value="TreeGrafter"/>
</dbReference>
<dbReference type="FunFam" id="3.40.50.720:FF:000045">
    <property type="entry name" value="1-deoxy-D-xylulose 5-phosphate reductoisomerase"/>
    <property type="match status" value="1"/>
</dbReference>
<dbReference type="Gene3D" id="1.10.1740.10">
    <property type="match status" value="1"/>
</dbReference>
<dbReference type="Gene3D" id="3.40.50.720">
    <property type="entry name" value="NAD(P)-binding Rossmann-like Domain"/>
    <property type="match status" value="1"/>
</dbReference>
<dbReference type="HAMAP" id="MF_00183">
    <property type="entry name" value="DXP_reductoisom"/>
    <property type="match status" value="1"/>
</dbReference>
<dbReference type="InterPro" id="IPR003821">
    <property type="entry name" value="DXP_reductoisomerase"/>
</dbReference>
<dbReference type="InterPro" id="IPR013644">
    <property type="entry name" value="DXP_reductoisomerase_C"/>
</dbReference>
<dbReference type="InterPro" id="IPR013512">
    <property type="entry name" value="DXP_reductoisomerase_N"/>
</dbReference>
<dbReference type="InterPro" id="IPR026877">
    <property type="entry name" value="DXPR_C"/>
</dbReference>
<dbReference type="InterPro" id="IPR036169">
    <property type="entry name" value="DXPR_C_sf"/>
</dbReference>
<dbReference type="InterPro" id="IPR036291">
    <property type="entry name" value="NAD(P)-bd_dom_sf"/>
</dbReference>
<dbReference type="NCBIfam" id="TIGR00243">
    <property type="entry name" value="Dxr"/>
    <property type="match status" value="1"/>
</dbReference>
<dbReference type="NCBIfam" id="NF009114">
    <property type="entry name" value="PRK12464.1"/>
    <property type="match status" value="1"/>
</dbReference>
<dbReference type="PANTHER" id="PTHR30525">
    <property type="entry name" value="1-DEOXY-D-XYLULOSE 5-PHOSPHATE REDUCTOISOMERASE"/>
    <property type="match status" value="1"/>
</dbReference>
<dbReference type="PANTHER" id="PTHR30525:SF0">
    <property type="entry name" value="1-DEOXY-D-XYLULOSE 5-PHOSPHATE REDUCTOISOMERASE, CHLOROPLASTIC"/>
    <property type="match status" value="1"/>
</dbReference>
<dbReference type="Pfam" id="PF08436">
    <property type="entry name" value="DXP_redisom_C"/>
    <property type="match status" value="1"/>
</dbReference>
<dbReference type="Pfam" id="PF02670">
    <property type="entry name" value="DXP_reductoisom"/>
    <property type="match status" value="1"/>
</dbReference>
<dbReference type="Pfam" id="PF13288">
    <property type="entry name" value="DXPR_C"/>
    <property type="match status" value="1"/>
</dbReference>
<dbReference type="PIRSF" id="PIRSF006205">
    <property type="entry name" value="Dxp_reductismrs"/>
    <property type="match status" value="1"/>
</dbReference>
<dbReference type="SUPFAM" id="SSF69055">
    <property type="entry name" value="1-deoxy-D-xylulose-5-phosphate reductoisomerase, C-terminal domain"/>
    <property type="match status" value="1"/>
</dbReference>
<dbReference type="SUPFAM" id="SSF55347">
    <property type="entry name" value="Glyceraldehyde-3-phosphate dehydrogenase-like, C-terminal domain"/>
    <property type="match status" value="1"/>
</dbReference>
<dbReference type="SUPFAM" id="SSF51735">
    <property type="entry name" value="NAD(P)-binding Rossmann-fold domains"/>
    <property type="match status" value="1"/>
</dbReference>
<feature type="chain" id="PRO_0000163613" description="1-deoxy-D-xylulose 5-phosphate reductoisomerase">
    <location>
        <begin position="1"/>
        <end position="388"/>
    </location>
</feature>
<feature type="binding site" evidence="1">
    <location>
        <position position="15"/>
    </location>
    <ligand>
        <name>NADPH</name>
        <dbReference type="ChEBI" id="CHEBI:57783"/>
    </ligand>
</feature>
<feature type="binding site" evidence="1">
    <location>
        <position position="16"/>
    </location>
    <ligand>
        <name>NADPH</name>
        <dbReference type="ChEBI" id="CHEBI:57783"/>
    </ligand>
</feature>
<feature type="binding site" evidence="1">
    <location>
        <position position="17"/>
    </location>
    <ligand>
        <name>NADPH</name>
        <dbReference type="ChEBI" id="CHEBI:57783"/>
    </ligand>
</feature>
<feature type="binding site" evidence="1">
    <location>
        <position position="18"/>
    </location>
    <ligand>
        <name>NADPH</name>
        <dbReference type="ChEBI" id="CHEBI:57783"/>
    </ligand>
</feature>
<feature type="binding site" evidence="1">
    <location>
        <position position="127"/>
    </location>
    <ligand>
        <name>NADPH</name>
        <dbReference type="ChEBI" id="CHEBI:57783"/>
    </ligand>
</feature>
<feature type="binding site" evidence="1">
    <location>
        <position position="128"/>
    </location>
    <ligand>
        <name>1-deoxy-D-xylulose 5-phosphate</name>
        <dbReference type="ChEBI" id="CHEBI:57792"/>
    </ligand>
</feature>
<feature type="binding site" evidence="1">
    <location>
        <position position="129"/>
    </location>
    <ligand>
        <name>NADPH</name>
        <dbReference type="ChEBI" id="CHEBI:57783"/>
    </ligand>
</feature>
<feature type="binding site" evidence="1">
    <location>
        <position position="153"/>
    </location>
    <ligand>
        <name>Mn(2+)</name>
        <dbReference type="ChEBI" id="CHEBI:29035"/>
    </ligand>
</feature>
<feature type="binding site" evidence="1">
    <location>
        <position position="154"/>
    </location>
    <ligand>
        <name>1-deoxy-D-xylulose 5-phosphate</name>
        <dbReference type="ChEBI" id="CHEBI:57792"/>
    </ligand>
</feature>
<feature type="binding site" evidence="1">
    <location>
        <position position="155"/>
    </location>
    <ligand>
        <name>1-deoxy-D-xylulose 5-phosphate</name>
        <dbReference type="ChEBI" id="CHEBI:57792"/>
    </ligand>
</feature>
<feature type="binding site" evidence="1">
    <location>
        <position position="155"/>
    </location>
    <ligand>
        <name>Mn(2+)</name>
        <dbReference type="ChEBI" id="CHEBI:29035"/>
    </ligand>
</feature>
<feature type="binding site" evidence="1">
    <location>
        <position position="179"/>
    </location>
    <ligand>
        <name>1-deoxy-D-xylulose 5-phosphate</name>
        <dbReference type="ChEBI" id="CHEBI:57792"/>
    </ligand>
</feature>
<feature type="binding site" evidence="1">
    <location>
        <position position="202"/>
    </location>
    <ligand>
        <name>1-deoxy-D-xylulose 5-phosphate</name>
        <dbReference type="ChEBI" id="CHEBI:57792"/>
    </ligand>
</feature>
<feature type="binding site" evidence="1">
    <location>
        <position position="208"/>
    </location>
    <ligand>
        <name>NADPH</name>
        <dbReference type="ChEBI" id="CHEBI:57783"/>
    </ligand>
</feature>
<feature type="binding site" evidence="1">
    <location>
        <position position="215"/>
    </location>
    <ligand>
        <name>1-deoxy-D-xylulose 5-phosphate</name>
        <dbReference type="ChEBI" id="CHEBI:57792"/>
    </ligand>
</feature>
<feature type="binding site" evidence="1">
    <location>
        <position position="220"/>
    </location>
    <ligand>
        <name>1-deoxy-D-xylulose 5-phosphate</name>
        <dbReference type="ChEBI" id="CHEBI:57792"/>
    </ligand>
</feature>
<feature type="binding site" evidence="1">
    <location>
        <position position="221"/>
    </location>
    <ligand>
        <name>1-deoxy-D-xylulose 5-phosphate</name>
        <dbReference type="ChEBI" id="CHEBI:57792"/>
    </ligand>
</feature>
<feature type="binding site" evidence="1">
    <location>
        <position position="224"/>
    </location>
    <ligand>
        <name>1-deoxy-D-xylulose 5-phosphate</name>
        <dbReference type="ChEBI" id="CHEBI:57792"/>
    </ligand>
</feature>
<feature type="binding site" evidence="1">
    <location>
        <position position="224"/>
    </location>
    <ligand>
        <name>Mn(2+)</name>
        <dbReference type="ChEBI" id="CHEBI:29035"/>
    </ligand>
</feature>
<gene>
    <name evidence="1" type="primary">dxr</name>
    <name type="ordered locus">BF3699</name>
</gene>
<comment type="function">
    <text evidence="1">Catalyzes the NADPH-dependent rearrangement and reduction of 1-deoxy-D-xylulose-5-phosphate (DXP) to 2-C-methyl-D-erythritol 4-phosphate (MEP).</text>
</comment>
<comment type="catalytic activity">
    <reaction evidence="1">
        <text>2-C-methyl-D-erythritol 4-phosphate + NADP(+) = 1-deoxy-D-xylulose 5-phosphate + NADPH + H(+)</text>
        <dbReference type="Rhea" id="RHEA:13717"/>
        <dbReference type="ChEBI" id="CHEBI:15378"/>
        <dbReference type="ChEBI" id="CHEBI:57783"/>
        <dbReference type="ChEBI" id="CHEBI:57792"/>
        <dbReference type="ChEBI" id="CHEBI:58262"/>
        <dbReference type="ChEBI" id="CHEBI:58349"/>
        <dbReference type="EC" id="1.1.1.267"/>
    </reaction>
    <physiologicalReaction direction="right-to-left" evidence="1">
        <dbReference type="Rhea" id="RHEA:13719"/>
    </physiologicalReaction>
</comment>
<comment type="cofactor">
    <cofactor evidence="1">
        <name>Mg(2+)</name>
        <dbReference type="ChEBI" id="CHEBI:18420"/>
    </cofactor>
    <cofactor evidence="1">
        <name>Mn(2+)</name>
        <dbReference type="ChEBI" id="CHEBI:29035"/>
    </cofactor>
</comment>
<comment type="pathway">
    <text evidence="1">Isoprenoid biosynthesis; isopentenyl diphosphate biosynthesis via DXP pathway; isopentenyl diphosphate from 1-deoxy-D-xylulose 5-phosphate: step 1/6.</text>
</comment>
<comment type="similarity">
    <text evidence="1">Belongs to the DXR family.</text>
</comment>